<feature type="chain" id="PRO_1000044700" description="Altronate oxidoreductase">
    <location>
        <begin position="1"/>
        <end position="479"/>
    </location>
</feature>
<feature type="binding site" evidence="1">
    <location>
        <begin position="18"/>
        <end position="29"/>
    </location>
    <ligand>
        <name>NAD(+)</name>
        <dbReference type="ChEBI" id="CHEBI:57540"/>
    </ligand>
</feature>
<reference key="1">
    <citation type="journal article" date="2007" name="PLoS Biol.">
        <title>Evolution of symbiotic bacteria in the distal human intestine.</title>
        <authorList>
            <person name="Xu J."/>
            <person name="Mahowald M.A."/>
            <person name="Ley R.E."/>
            <person name="Lozupone C.A."/>
            <person name="Hamady M."/>
            <person name="Martens E.C."/>
            <person name="Henrissat B."/>
            <person name="Coutinho P.M."/>
            <person name="Minx P."/>
            <person name="Latreille P."/>
            <person name="Cordum H."/>
            <person name="Van Brunt A."/>
            <person name="Kim K."/>
            <person name="Fulton R.S."/>
            <person name="Fulton L.A."/>
            <person name="Clifton S.W."/>
            <person name="Wilson R.K."/>
            <person name="Knight R.D."/>
            <person name="Gordon J.I."/>
        </authorList>
    </citation>
    <scope>NUCLEOTIDE SEQUENCE [LARGE SCALE GENOMIC DNA]</scope>
    <source>
        <strain>ATCC 8482 / DSM 1447 / JCM 5826 / CCUG 4940 / NBRC 14291 / NCTC 11154</strain>
    </source>
</reference>
<evidence type="ECO:0000255" key="1">
    <source>
        <dbReference type="HAMAP-Rule" id="MF_00670"/>
    </source>
</evidence>
<proteinExistence type="inferred from homology"/>
<dbReference type="EC" id="1.1.1.58" evidence="1"/>
<dbReference type="EMBL" id="CP000139">
    <property type="protein sequence ID" value="ABR40709.1"/>
    <property type="molecule type" value="Genomic_DNA"/>
</dbReference>
<dbReference type="RefSeq" id="WP_005846561.1">
    <property type="nucleotide sequence ID" value="NZ_JANSWM010000088.1"/>
</dbReference>
<dbReference type="SMR" id="A6L4U5"/>
<dbReference type="STRING" id="435590.BVU_3075"/>
<dbReference type="PaxDb" id="435590-BVU_3075"/>
<dbReference type="GeneID" id="5304036"/>
<dbReference type="KEGG" id="bvu:BVU_3075"/>
<dbReference type="eggNOG" id="COG0246">
    <property type="taxonomic scope" value="Bacteria"/>
</dbReference>
<dbReference type="HOGENOM" id="CLU_027324_1_0_10"/>
<dbReference type="BioCyc" id="BVUL435590:G1G59-3199-MONOMER"/>
<dbReference type="UniPathway" id="UPA00246"/>
<dbReference type="Proteomes" id="UP000002861">
    <property type="component" value="Chromosome"/>
</dbReference>
<dbReference type="GO" id="GO:0005829">
    <property type="term" value="C:cytosol"/>
    <property type="evidence" value="ECO:0007669"/>
    <property type="project" value="TreeGrafter"/>
</dbReference>
<dbReference type="GO" id="GO:0008926">
    <property type="term" value="F:mannitol-1-phosphate 5-dehydrogenase activity"/>
    <property type="evidence" value="ECO:0007669"/>
    <property type="project" value="TreeGrafter"/>
</dbReference>
<dbReference type="GO" id="GO:0009026">
    <property type="term" value="F:tagaturonate reductase activity"/>
    <property type="evidence" value="ECO:0007669"/>
    <property type="project" value="UniProtKB-UniRule"/>
</dbReference>
<dbReference type="GO" id="GO:0019592">
    <property type="term" value="P:mannitol catabolic process"/>
    <property type="evidence" value="ECO:0007669"/>
    <property type="project" value="TreeGrafter"/>
</dbReference>
<dbReference type="FunFam" id="3.40.50.720:FF:000343">
    <property type="entry name" value="Altronate oxidoreductase"/>
    <property type="match status" value="1"/>
</dbReference>
<dbReference type="Gene3D" id="1.10.1040.10">
    <property type="entry name" value="N-(1-d-carboxylethyl)-l-norvaline Dehydrogenase, domain 2"/>
    <property type="match status" value="1"/>
</dbReference>
<dbReference type="Gene3D" id="3.40.50.720">
    <property type="entry name" value="NAD(P)-binding Rossmann-like Domain"/>
    <property type="match status" value="1"/>
</dbReference>
<dbReference type="HAMAP" id="MF_00670">
    <property type="entry name" value="Altron_oxidoreduct"/>
    <property type="match status" value="1"/>
</dbReference>
<dbReference type="InterPro" id="IPR008927">
    <property type="entry name" value="6-PGluconate_DH-like_C_sf"/>
</dbReference>
<dbReference type="InterPro" id="IPR013328">
    <property type="entry name" value="6PGD_dom2"/>
</dbReference>
<dbReference type="InterPro" id="IPR023668">
    <property type="entry name" value="Altronate_OxRdtase"/>
</dbReference>
<dbReference type="InterPro" id="IPR013118">
    <property type="entry name" value="Mannitol_DH_C"/>
</dbReference>
<dbReference type="InterPro" id="IPR013131">
    <property type="entry name" value="Mannitol_DH_N"/>
</dbReference>
<dbReference type="InterPro" id="IPR036291">
    <property type="entry name" value="NAD(P)-bd_dom_sf"/>
</dbReference>
<dbReference type="NCBIfam" id="NF002969">
    <property type="entry name" value="PRK03643.1"/>
    <property type="match status" value="1"/>
</dbReference>
<dbReference type="PANTHER" id="PTHR30524:SF0">
    <property type="entry name" value="ALTRONATE OXIDOREDUCTASE-RELATED"/>
    <property type="match status" value="1"/>
</dbReference>
<dbReference type="PANTHER" id="PTHR30524">
    <property type="entry name" value="MANNITOL-1-PHOSPHATE 5-DEHYDROGENASE"/>
    <property type="match status" value="1"/>
</dbReference>
<dbReference type="Pfam" id="PF01232">
    <property type="entry name" value="Mannitol_dh"/>
    <property type="match status" value="1"/>
</dbReference>
<dbReference type="Pfam" id="PF08125">
    <property type="entry name" value="Mannitol_dh_C"/>
    <property type="match status" value="1"/>
</dbReference>
<dbReference type="SUPFAM" id="SSF48179">
    <property type="entry name" value="6-phosphogluconate dehydrogenase C-terminal domain-like"/>
    <property type="match status" value="1"/>
</dbReference>
<dbReference type="SUPFAM" id="SSF51735">
    <property type="entry name" value="NAD(P)-binding Rossmann-fold domains"/>
    <property type="match status" value="1"/>
</dbReference>
<name>UXAB_PHOV8</name>
<protein>
    <recommendedName>
        <fullName evidence="1">Altronate oxidoreductase</fullName>
        <ecNumber evidence="1">1.1.1.58</ecNumber>
    </recommendedName>
    <alternativeName>
        <fullName evidence="1">Tagaturonate dehydrogenase</fullName>
    </alternativeName>
    <alternativeName>
        <fullName evidence="1">Tagaturonate reductase</fullName>
    </alternativeName>
</protein>
<sequence length="479" mass="53904">MKALNKETAAKTQRPERIIQFGEGNFLRAFVDWIIYNMNEKTDFNSSVVVVQPIEKGMVDMLNAQDCLYHVNLQGLDKGQVVNSLTKIDVISRALNPYSQNDEFMKLAEQPEMRFVISNTTEAGIAFDPACKLDDAPASSYPGKLTQLLYHRYKTFNGDKSKGLIIFPCELIFLNGHKLKETIYQYIDLWNLGEDFKQWFEEACGVYATLVDRIVPGFPRKDIAAIKEKLQYDDNLVVQAEIFHLWVIEAPQEVAKEFPADKAGLNVLFVPSEAPYHERKVTLLNGPHTVLSPVAYLSGINIVREACEHEVVGKYIHKVMFDELMETLNLPKEELKKFAEDVLERFNNPFVDHQVTSIMLNSFPKYETRDLPGLKVYLERKGELPKGLVLGLAAIITYYKGGVRADGAEIVPNDAPEIMNLLKELWATGCTQKVAEGVLAAESIWGENLNNIPGLTAAVKADLDSIQEKGMLETVKGIL</sequence>
<gene>
    <name evidence="1" type="primary">uxaB</name>
    <name type="ordered locus">BVU_3075</name>
</gene>
<keyword id="KW-0520">NAD</keyword>
<keyword id="KW-0560">Oxidoreductase</keyword>
<accession>A6L4U5</accession>
<comment type="catalytic activity">
    <reaction evidence="1">
        <text>D-altronate + NAD(+) = keto-D-tagaturonate + NADH + H(+)</text>
        <dbReference type="Rhea" id="RHEA:17813"/>
        <dbReference type="ChEBI" id="CHEBI:15378"/>
        <dbReference type="ChEBI" id="CHEBI:17360"/>
        <dbReference type="ChEBI" id="CHEBI:17886"/>
        <dbReference type="ChEBI" id="CHEBI:57540"/>
        <dbReference type="ChEBI" id="CHEBI:57945"/>
        <dbReference type="EC" id="1.1.1.58"/>
    </reaction>
</comment>
<comment type="pathway">
    <text evidence="1">Carbohydrate metabolism; pentose and glucuronate interconversion.</text>
</comment>
<comment type="similarity">
    <text evidence="1">Belongs to the mannitol dehydrogenase family. UxaB subfamily.</text>
</comment>
<organism>
    <name type="scientific">Phocaeicola vulgatus (strain ATCC 8482 / DSM 1447 / JCM 5826 / CCUG 4940 / NBRC 14291 / NCTC 11154)</name>
    <name type="common">Bacteroides vulgatus</name>
    <dbReference type="NCBI Taxonomy" id="435590"/>
    <lineage>
        <taxon>Bacteria</taxon>
        <taxon>Pseudomonadati</taxon>
        <taxon>Bacteroidota</taxon>
        <taxon>Bacteroidia</taxon>
        <taxon>Bacteroidales</taxon>
        <taxon>Bacteroidaceae</taxon>
        <taxon>Phocaeicola</taxon>
    </lineage>
</organism>